<reference key="1">
    <citation type="journal article" date="2008" name="BMC Genomics">
        <title>The missing link: Bordetella petrii is endowed with both the metabolic versatility of environmental bacteria and virulence traits of pathogenic Bordetellae.</title>
        <authorList>
            <person name="Gross R."/>
            <person name="Guzman C.A."/>
            <person name="Sebaihia M."/>
            <person name="Martin dos Santos V.A.P."/>
            <person name="Pieper D.H."/>
            <person name="Koebnik R."/>
            <person name="Lechner M."/>
            <person name="Bartels D."/>
            <person name="Buhrmester J."/>
            <person name="Choudhuri J.V."/>
            <person name="Ebensen T."/>
            <person name="Gaigalat L."/>
            <person name="Herrmann S."/>
            <person name="Khachane A.N."/>
            <person name="Larisch C."/>
            <person name="Link S."/>
            <person name="Linke B."/>
            <person name="Meyer F."/>
            <person name="Mormann S."/>
            <person name="Nakunst D."/>
            <person name="Rueckert C."/>
            <person name="Schneiker-Bekel S."/>
            <person name="Schulze K."/>
            <person name="Voerholter F.-J."/>
            <person name="Yevsa T."/>
            <person name="Engle J.T."/>
            <person name="Goldman W.E."/>
            <person name="Puehler A."/>
            <person name="Goebel U.B."/>
            <person name="Goesmann A."/>
            <person name="Bloecker H."/>
            <person name="Kaiser O."/>
            <person name="Martinez-Arias R."/>
        </authorList>
    </citation>
    <scope>NUCLEOTIDE SEQUENCE [LARGE SCALE GENOMIC DNA]</scope>
    <source>
        <strain>ATCC BAA-461 / DSM 12804 / CCUG 43448</strain>
    </source>
</reference>
<gene>
    <name type="ordered locus">Bpet0062</name>
</gene>
<keyword id="KW-0997">Cell inner membrane</keyword>
<keyword id="KW-1003">Cell membrane</keyword>
<keyword id="KW-0472">Membrane</keyword>
<keyword id="KW-0812">Transmembrane</keyword>
<keyword id="KW-1133">Transmembrane helix</keyword>
<name>Y062_BORPD</name>
<feature type="chain" id="PRO_1000089235" description="UPF0060 membrane protein Bpet0062">
    <location>
        <begin position="1"/>
        <end position="110"/>
    </location>
</feature>
<feature type="transmembrane region" description="Helical" evidence="1">
    <location>
        <begin position="7"/>
        <end position="27"/>
    </location>
</feature>
<feature type="transmembrane region" description="Helical" evidence="1">
    <location>
        <begin position="33"/>
        <end position="53"/>
    </location>
</feature>
<feature type="transmembrane region" description="Helical" evidence="1">
    <location>
        <begin position="63"/>
        <end position="83"/>
    </location>
</feature>
<feature type="transmembrane region" description="Helical" evidence="1">
    <location>
        <begin position="86"/>
        <end position="106"/>
    </location>
</feature>
<sequence length="110" mass="11705">MPLLHTLGLFALTAVAEIVGCYLPYLWLKQGHSAWLLVPAALSLAVFAWLLTLHPTASGRVYAAYGGVYVSMALLWLWAVDGVRPATTDWAGVGLCLAGMALIMAGPRHG</sequence>
<dbReference type="EMBL" id="AM902716">
    <property type="protein sequence ID" value="CAP40393.1"/>
    <property type="molecule type" value="Genomic_DNA"/>
</dbReference>
<dbReference type="STRING" id="94624.Bpet0062"/>
<dbReference type="KEGG" id="bpt:Bpet0062"/>
<dbReference type="eggNOG" id="COG1742">
    <property type="taxonomic scope" value="Bacteria"/>
</dbReference>
<dbReference type="Proteomes" id="UP000001225">
    <property type="component" value="Chromosome"/>
</dbReference>
<dbReference type="GO" id="GO:0005886">
    <property type="term" value="C:plasma membrane"/>
    <property type="evidence" value="ECO:0007669"/>
    <property type="project" value="UniProtKB-SubCell"/>
</dbReference>
<dbReference type="HAMAP" id="MF_00010">
    <property type="entry name" value="UPF0060"/>
    <property type="match status" value="1"/>
</dbReference>
<dbReference type="InterPro" id="IPR003844">
    <property type="entry name" value="UPF0060"/>
</dbReference>
<dbReference type="NCBIfam" id="NF002586">
    <property type="entry name" value="PRK02237.1"/>
    <property type="match status" value="1"/>
</dbReference>
<dbReference type="PANTHER" id="PTHR36116">
    <property type="entry name" value="UPF0060 MEMBRANE PROTEIN YNFA"/>
    <property type="match status" value="1"/>
</dbReference>
<dbReference type="PANTHER" id="PTHR36116:SF1">
    <property type="entry name" value="UPF0060 MEMBRANE PROTEIN YNFA"/>
    <property type="match status" value="1"/>
</dbReference>
<dbReference type="Pfam" id="PF02694">
    <property type="entry name" value="UPF0060"/>
    <property type="match status" value="1"/>
</dbReference>
<dbReference type="SUPFAM" id="SSF103481">
    <property type="entry name" value="Multidrug resistance efflux transporter EmrE"/>
    <property type="match status" value="1"/>
</dbReference>
<accession>A9HVV4</accession>
<evidence type="ECO:0000255" key="1">
    <source>
        <dbReference type="HAMAP-Rule" id="MF_00010"/>
    </source>
</evidence>
<organism>
    <name type="scientific">Bordetella petrii (strain ATCC BAA-461 / DSM 12804 / CCUG 43448)</name>
    <dbReference type="NCBI Taxonomy" id="340100"/>
    <lineage>
        <taxon>Bacteria</taxon>
        <taxon>Pseudomonadati</taxon>
        <taxon>Pseudomonadota</taxon>
        <taxon>Betaproteobacteria</taxon>
        <taxon>Burkholderiales</taxon>
        <taxon>Alcaligenaceae</taxon>
        <taxon>Bordetella</taxon>
    </lineage>
</organism>
<proteinExistence type="inferred from homology"/>
<protein>
    <recommendedName>
        <fullName evidence="1">UPF0060 membrane protein Bpet0062</fullName>
    </recommendedName>
</protein>
<comment type="subcellular location">
    <subcellularLocation>
        <location evidence="1">Cell inner membrane</location>
        <topology evidence="1">Multi-pass membrane protein</topology>
    </subcellularLocation>
</comment>
<comment type="similarity">
    <text evidence="1">Belongs to the UPF0060 family.</text>
</comment>